<gene>
    <name evidence="1" type="primary">cobD</name>
    <name type="ordered locus">LMOf2365_1201</name>
</gene>
<name>COBD_LISMF</name>
<evidence type="ECO:0000255" key="1">
    <source>
        <dbReference type="HAMAP-Rule" id="MF_00024"/>
    </source>
</evidence>
<comment type="function">
    <text evidence="1">Converts cobyric acid to cobinamide by the addition of aminopropanol on the F carboxylic group.</text>
</comment>
<comment type="pathway">
    <text evidence="1">Cofactor biosynthesis; adenosylcobalamin biosynthesis.</text>
</comment>
<comment type="subcellular location">
    <subcellularLocation>
        <location evidence="1">Cell membrane</location>
        <topology evidence="1">Multi-pass membrane protein</topology>
    </subcellularLocation>
</comment>
<comment type="similarity">
    <text evidence="1">Belongs to the CobD/CbiB family.</text>
</comment>
<feature type="chain" id="PRO_0000150930" description="Cobalamin biosynthesis protein CobD">
    <location>
        <begin position="1"/>
        <end position="315"/>
    </location>
</feature>
<feature type="transmembrane region" description="Helical" evidence="1">
    <location>
        <begin position="54"/>
        <end position="74"/>
    </location>
</feature>
<feature type="transmembrane region" description="Helical" evidence="1">
    <location>
        <begin position="78"/>
        <end position="98"/>
    </location>
</feature>
<feature type="transmembrane region" description="Helical" evidence="1">
    <location>
        <begin position="152"/>
        <end position="172"/>
    </location>
</feature>
<feature type="transmembrane region" description="Helical" evidence="1">
    <location>
        <begin position="203"/>
        <end position="223"/>
    </location>
</feature>
<feature type="transmembrane region" description="Helical" evidence="1">
    <location>
        <begin position="295"/>
        <end position="315"/>
    </location>
</feature>
<protein>
    <recommendedName>
        <fullName evidence="1">Cobalamin biosynthesis protein CobD</fullName>
    </recommendedName>
</protein>
<proteinExistence type="inferred from homology"/>
<accession>Q720N7</accession>
<organism>
    <name type="scientific">Listeria monocytogenes serotype 4b (strain F2365)</name>
    <dbReference type="NCBI Taxonomy" id="265669"/>
    <lineage>
        <taxon>Bacteria</taxon>
        <taxon>Bacillati</taxon>
        <taxon>Bacillota</taxon>
        <taxon>Bacilli</taxon>
        <taxon>Bacillales</taxon>
        <taxon>Listeriaceae</taxon>
        <taxon>Listeria</taxon>
    </lineage>
</organism>
<sequence>MILLFYTSSFILDCLLGDPYSWPHPIKAIGNLIKWLTIILRKIFHGKSLYFAGGLLFVLTVGMTGVVSWFILFLSAKIAYWLYVAVFVYLGYTTLAMTCLAKEARKIQRTLADGDLAAARVQVGMIVGRDTDKLTAEEISKATIETVAENTADGVIAPLFYLFIGGPVLALMYKAVNTLDSMVGYKNEKYRAIGFVSAKMDDIANFIPARLAWFFLVIASFILRYDGRASWQIGLRDRKNHTSPNCAYPEGAVAGALGITLGGTHEYFGETVIKPTIGSGNKPVSEKEISQTIHLLYTASTIAFIIFASIYLLLF</sequence>
<keyword id="KW-1003">Cell membrane</keyword>
<keyword id="KW-0169">Cobalamin biosynthesis</keyword>
<keyword id="KW-0472">Membrane</keyword>
<keyword id="KW-0812">Transmembrane</keyword>
<keyword id="KW-1133">Transmembrane helix</keyword>
<reference key="1">
    <citation type="journal article" date="2004" name="Nucleic Acids Res.">
        <title>Whole genome comparisons of serotype 4b and 1/2a strains of the food-borne pathogen Listeria monocytogenes reveal new insights into the core genome components of this species.</title>
        <authorList>
            <person name="Nelson K.E."/>
            <person name="Fouts D.E."/>
            <person name="Mongodin E.F."/>
            <person name="Ravel J."/>
            <person name="DeBoy R.T."/>
            <person name="Kolonay J.F."/>
            <person name="Rasko D.A."/>
            <person name="Angiuoli S.V."/>
            <person name="Gill S.R."/>
            <person name="Paulsen I.T."/>
            <person name="Peterson J.D."/>
            <person name="White O."/>
            <person name="Nelson W.C."/>
            <person name="Nierman W.C."/>
            <person name="Beanan M.J."/>
            <person name="Brinkac L.M."/>
            <person name="Daugherty S.C."/>
            <person name="Dodson R.J."/>
            <person name="Durkin A.S."/>
            <person name="Madupu R."/>
            <person name="Haft D.H."/>
            <person name="Selengut J."/>
            <person name="Van Aken S.E."/>
            <person name="Khouri H.M."/>
            <person name="Fedorova N."/>
            <person name="Forberger H.A."/>
            <person name="Tran B."/>
            <person name="Kathariou S."/>
            <person name="Wonderling L.D."/>
            <person name="Uhlich G.A."/>
            <person name="Bayles D.O."/>
            <person name="Luchansky J.B."/>
            <person name="Fraser C.M."/>
        </authorList>
    </citation>
    <scope>NUCLEOTIDE SEQUENCE [LARGE SCALE GENOMIC DNA]</scope>
    <source>
        <strain>F2365</strain>
    </source>
</reference>
<dbReference type="EMBL" id="AE017262">
    <property type="protein sequence ID" value="AAT03977.1"/>
    <property type="molecule type" value="Genomic_DNA"/>
</dbReference>
<dbReference type="KEGG" id="lmf:LMOf2365_1201"/>
<dbReference type="HOGENOM" id="CLU_054212_0_0_9"/>
<dbReference type="UniPathway" id="UPA00148"/>
<dbReference type="GO" id="GO:0005886">
    <property type="term" value="C:plasma membrane"/>
    <property type="evidence" value="ECO:0007669"/>
    <property type="project" value="UniProtKB-SubCell"/>
</dbReference>
<dbReference type="GO" id="GO:0015420">
    <property type="term" value="F:ABC-type vitamin B12 transporter activity"/>
    <property type="evidence" value="ECO:0007669"/>
    <property type="project" value="UniProtKB-UniRule"/>
</dbReference>
<dbReference type="GO" id="GO:0048472">
    <property type="term" value="F:threonine-phosphate decarboxylase activity"/>
    <property type="evidence" value="ECO:0007669"/>
    <property type="project" value="InterPro"/>
</dbReference>
<dbReference type="GO" id="GO:0009236">
    <property type="term" value="P:cobalamin biosynthetic process"/>
    <property type="evidence" value="ECO:0007669"/>
    <property type="project" value="UniProtKB-UniRule"/>
</dbReference>
<dbReference type="HAMAP" id="MF_00024">
    <property type="entry name" value="CobD_CbiB"/>
    <property type="match status" value="1"/>
</dbReference>
<dbReference type="InterPro" id="IPR004485">
    <property type="entry name" value="Cobalamin_biosynth_CobD/CbiB"/>
</dbReference>
<dbReference type="NCBIfam" id="TIGR00380">
    <property type="entry name" value="cobal_cbiB"/>
    <property type="match status" value="1"/>
</dbReference>
<dbReference type="PANTHER" id="PTHR34308">
    <property type="entry name" value="COBALAMIN BIOSYNTHESIS PROTEIN CBIB"/>
    <property type="match status" value="1"/>
</dbReference>
<dbReference type="PANTHER" id="PTHR34308:SF1">
    <property type="entry name" value="COBALAMIN BIOSYNTHESIS PROTEIN CBIB"/>
    <property type="match status" value="1"/>
</dbReference>
<dbReference type="Pfam" id="PF03186">
    <property type="entry name" value="CobD_Cbib"/>
    <property type="match status" value="1"/>
</dbReference>